<organism>
    <name type="scientific">Klebsiella pneumoniae (strain 342)</name>
    <dbReference type="NCBI Taxonomy" id="507522"/>
    <lineage>
        <taxon>Bacteria</taxon>
        <taxon>Pseudomonadati</taxon>
        <taxon>Pseudomonadota</taxon>
        <taxon>Gammaproteobacteria</taxon>
        <taxon>Enterobacterales</taxon>
        <taxon>Enterobacteriaceae</taxon>
        <taxon>Klebsiella/Raoultella group</taxon>
        <taxon>Klebsiella</taxon>
        <taxon>Klebsiella pneumoniae complex</taxon>
    </lineage>
</organism>
<accession>B5XNF8</accession>
<protein>
    <recommendedName>
        <fullName evidence="1">Uracil-DNA glycosylase</fullName>
        <shortName evidence="1">UDG</shortName>
        <ecNumber evidence="1">3.2.2.27</ecNumber>
    </recommendedName>
</protein>
<feature type="chain" id="PRO_1000096587" description="Uracil-DNA glycosylase">
    <location>
        <begin position="1"/>
        <end position="229"/>
    </location>
</feature>
<feature type="active site" description="Proton acceptor" evidence="1">
    <location>
        <position position="64"/>
    </location>
</feature>
<sequence length="229" mass="25494">MTTSLTWHDVLADEKQQPYFLNTLKTVAEERQSGITIYPPQKDVFNAFRFTELGDVKVVILGQDPYHGPGQAHGLAFSVRPGVAIPPSLLNMYKELEATIPGFTRPTHGYLESWARQGVLLLNTVLTVRAGQAHSHASLGWETFTDKVIALINEHCEGVVFLLWGSHAQKKGAIIDRQRHCVLKAPHPSPLSAHRGFFGSNHFVQTNQWLADRGEAPIDWMPVLPAESE</sequence>
<proteinExistence type="inferred from homology"/>
<gene>
    <name evidence="1" type="primary">ung</name>
    <name type="ordered locus">KPK_1218</name>
</gene>
<dbReference type="EC" id="3.2.2.27" evidence="1"/>
<dbReference type="EMBL" id="CP000964">
    <property type="protein sequence ID" value="ACI10701.1"/>
    <property type="molecule type" value="Genomic_DNA"/>
</dbReference>
<dbReference type="SMR" id="B5XNF8"/>
<dbReference type="KEGG" id="kpe:KPK_1218"/>
<dbReference type="HOGENOM" id="CLU_032162_3_0_6"/>
<dbReference type="Proteomes" id="UP000001734">
    <property type="component" value="Chromosome"/>
</dbReference>
<dbReference type="GO" id="GO:0005737">
    <property type="term" value="C:cytoplasm"/>
    <property type="evidence" value="ECO:0007669"/>
    <property type="project" value="UniProtKB-SubCell"/>
</dbReference>
<dbReference type="GO" id="GO:0004844">
    <property type="term" value="F:uracil DNA N-glycosylase activity"/>
    <property type="evidence" value="ECO:0007669"/>
    <property type="project" value="UniProtKB-UniRule"/>
</dbReference>
<dbReference type="GO" id="GO:0097510">
    <property type="term" value="P:base-excision repair, AP site formation via deaminated base removal"/>
    <property type="evidence" value="ECO:0007669"/>
    <property type="project" value="TreeGrafter"/>
</dbReference>
<dbReference type="CDD" id="cd10027">
    <property type="entry name" value="UDG-F1-like"/>
    <property type="match status" value="1"/>
</dbReference>
<dbReference type="FunFam" id="3.40.470.10:FF:000001">
    <property type="entry name" value="Uracil-DNA glycosylase"/>
    <property type="match status" value="1"/>
</dbReference>
<dbReference type="Gene3D" id="3.40.470.10">
    <property type="entry name" value="Uracil-DNA glycosylase-like domain"/>
    <property type="match status" value="1"/>
</dbReference>
<dbReference type="HAMAP" id="MF_00148">
    <property type="entry name" value="UDG"/>
    <property type="match status" value="1"/>
</dbReference>
<dbReference type="InterPro" id="IPR002043">
    <property type="entry name" value="UDG_fam1"/>
</dbReference>
<dbReference type="InterPro" id="IPR018085">
    <property type="entry name" value="Ura-DNA_Glyclase_AS"/>
</dbReference>
<dbReference type="InterPro" id="IPR005122">
    <property type="entry name" value="Uracil-DNA_glycosylase-like"/>
</dbReference>
<dbReference type="InterPro" id="IPR036895">
    <property type="entry name" value="Uracil-DNA_glycosylase-like_sf"/>
</dbReference>
<dbReference type="NCBIfam" id="NF003588">
    <property type="entry name" value="PRK05254.1-1"/>
    <property type="match status" value="1"/>
</dbReference>
<dbReference type="NCBIfam" id="NF003589">
    <property type="entry name" value="PRK05254.1-2"/>
    <property type="match status" value="1"/>
</dbReference>
<dbReference type="NCBIfam" id="NF003591">
    <property type="entry name" value="PRK05254.1-4"/>
    <property type="match status" value="1"/>
</dbReference>
<dbReference type="NCBIfam" id="NF003592">
    <property type="entry name" value="PRK05254.1-5"/>
    <property type="match status" value="1"/>
</dbReference>
<dbReference type="NCBIfam" id="TIGR00628">
    <property type="entry name" value="ung"/>
    <property type="match status" value="1"/>
</dbReference>
<dbReference type="PANTHER" id="PTHR11264">
    <property type="entry name" value="URACIL-DNA GLYCOSYLASE"/>
    <property type="match status" value="1"/>
</dbReference>
<dbReference type="PANTHER" id="PTHR11264:SF0">
    <property type="entry name" value="URACIL-DNA GLYCOSYLASE"/>
    <property type="match status" value="1"/>
</dbReference>
<dbReference type="Pfam" id="PF03167">
    <property type="entry name" value="UDG"/>
    <property type="match status" value="1"/>
</dbReference>
<dbReference type="SMART" id="SM00986">
    <property type="entry name" value="UDG"/>
    <property type="match status" value="1"/>
</dbReference>
<dbReference type="SMART" id="SM00987">
    <property type="entry name" value="UreE_C"/>
    <property type="match status" value="1"/>
</dbReference>
<dbReference type="SUPFAM" id="SSF52141">
    <property type="entry name" value="Uracil-DNA glycosylase-like"/>
    <property type="match status" value="1"/>
</dbReference>
<dbReference type="PROSITE" id="PS00130">
    <property type="entry name" value="U_DNA_GLYCOSYLASE"/>
    <property type="match status" value="1"/>
</dbReference>
<keyword id="KW-0963">Cytoplasm</keyword>
<keyword id="KW-0227">DNA damage</keyword>
<keyword id="KW-0234">DNA repair</keyword>
<keyword id="KW-0378">Hydrolase</keyword>
<reference key="1">
    <citation type="journal article" date="2008" name="PLoS Genet.">
        <title>Complete genome sequence of the N2-fixing broad host range endophyte Klebsiella pneumoniae 342 and virulence predictions verified in mice.</title>
        <authorList>
            <person name="Fouts D.E."/>
            <person name="Tyler H.L."/>
            <person name="DeBoy R.T."/>
            <person name="Daugherty S."/>
            <person name="Ren Q."/>
            <person name="Badger J.H."/>
            <person name="Durkin A.S."/>
            <person name="Huot H."/>
            <person name="Shrivastava S."/>
            <person name="Kothari S."/>
            <person name="Dodson R.J."/>
            <person name="Mohamoud Y."/>
            <person name="Khouri H."/>
            <person name="Roesch L.F.W."/>
            <person name="Krogfelt K.A."/>
            <person name="Struve C."/>
            <person name="Triplett E.W."/>
            <person name="Methe B.A."/>
        </authorList>
    </citation>
    <scope>NUCLEOTIDE SEQUENCE [LARGE SCALE GENOMIC DNA]</scope>
    <source>
        <strain>342</strain>
    </source>
</reference>
<comment type="function">
    <text evidence="1">Excises uracil residues from the DNA which can arise as a result of misincorporation of dUMP residues by DNA polymerase or due to deamination of cytosine.</text>
</comment>
<comment type="catalytic activity">
    <reaction evidence="1">
        <text>Hydrolyzes single-stranded DNA or mismatched double-stranded DNA and polynucleotides, releasing free uracil.</text>
        <dbReference type="EC" id="3.2.2.27"/>
    </reaction>
</comment>
<comment type="subcellular location">
    <subcellularLocation>
        <location evidence="1">Cytoplasm</location>
    </subcellularLocation>
</comment>
<comment type="similarity">
    <text evidence="1">Belongs to the uracil-DNA glycosylase (UDG) superfamily. UNG family.</text>
</comment>
<evidence type="ECO:0000255" key="1">
    <source>
        <dbReference type="HAMAP-Rule" id="MF_00148"/>
    </source>
</evidence>
<name>UNG_KLEP3</name>